<evidence type="ECO:0000250" key="1">
    <source>
        <dbReference type="UniProtKB" id="P31107"/>
    </source>
</evidence>
<evidence type="ECO:0000255" key="2"/>
<evidence type="ECO:0000269" key="3">
    <source>
    </source>
</evidence>
<evidence type="ECO:0000269" key="4">
    <source>
    </source>
</evidence>
<evidence type="ECO:0000303" key="5">
    <source>
    </source>
</evidence>
<evidence type="ECO:0000305" key="6"/>
<evidence type="ECO:0000305" key="7">
    <source>
    </source>
</evidence>
<evidence type="ECO:0000305" key="8">
    <source>
    </source>
</evidence>
<organism>
    <name type="scientific">Agalychnis spurrelli</name>
    <name type="common">Gliding leaf frog</name>
    <name type="synonym">Agalychnis litodryas</name>
    <dbReference type="NCBI Taxonomy" id="317303"/>
    <lineage>
        <taxon>Eukaryota</taxon>
        <taxon>Metazoa</taxon>
        <taxon>Chordata</taxon>
        <taxon>Craniata</taxon>
        <taxon>Vertebrata</taxon>
        <taxon>Euteleostomi</taxon>
        <taxon>Amphibia</taxon>
        <taxon>Batrachia</taxon>
        <taxon>Anura</taxon>
        <taxon>Neobatrachia</taxon>
        <taxon>Hyloidea</taxon>
        <taxon>Hylidae</taxon>
        <taxon>Phyllomedusinae</taxon>
        <taxon>Agalychnis</taxon>
    </lineage>
</organism>
<feature type="signal peptide" evidence="2">
    <location>
        <begin position="1"/>
        <end position="22"/>
    </location>
</feature>
<feature type="propeptide" id="PRO_0000449989" evidence="8">
    <location>
        <begin position="23"/>
        <end position="45"/>
    </location>
</feature>
<feature type="peptide" id="PRO_0000449990" description="Dermaseptin-SP4" evidence="8">
    <location>
        <begin position="46"/>
        <end position="72"/>
    </location>
</feature>
<feature type="propeptide" id="PRO_0000449991" evidence="8">
    <location>
        <begin position="74"/>
        <end position="75"/>
    </location>
</feature>
<feature type="modified residue" description="Proline amide" evidence="8">
    <location>
        <position position="72"/>
    </location>
</feature>
<protein>
    <recommendedName>
        <fullName evidence="5">Dermaseptin-SP4</fullName>
        <shortName evidence="5">DRS-SP4</shortName>
    </recommendedName>
</protein>
<reference key="1">
    <citation type="journal article" date="2019" name="Biomolecules">
        <title>Unravelling the skin secretion peptides of the gliding leaf frog, Agalychnis spurrelli (Hylidae).</title>
        <authorList>
            <person name="Proano-Bolanos C."/>
            <person name="Blasco-Zuniga A."/>
            <person name="Almeida J.R."/>
            <person name="Wang L."/>
            <person name="Llumiquinga M.A."/>
            <person name="Rivera M."/>
            <person name="Zhou M."/>
            <person name="Chen T."/>
            <person name="Shaw C."/>
        </authorList>
    </citation>
    <scope>NUCLEOTIDE SEQUENCE [MRNA]</scope>
    <scope>FUNCTION</scope>
    <scope>IDENTIFICATION BY MASS SPECTROMETRY</scope>
    <scope>SYNTHESIS OF 46-72</scope>
    <scope>SUBCELLULAR LOCATION</scope>
    <scope>AMIDATION AT PRO-72</scope>
    <source>
        <tissue>Skin secretion</tissue>
    </source>
</reference>
<reference key="2">
    <citation type="journal article" date="2019" name="J. Mol. Model.">
        <title>Molecular modeling of four dermaseptin-related peptides of the gliding tree frog Agalychnis spurrelli.</title>
        <authorList>
            <person name="Cuesta S."/>
            <person name="Gallegos F."/>
            <person name="Arias J."/>
            <person name="Pilaquinga F."/>
            <person name="Blasco-Zuniga A."/>
            <person name="Proano-Bolanos C."/>
            <person name="Rivera M."/>
            <person name="Meneses L."/>
        </authorList>
    </citation>
    <scope>NUCLEOTIDE SEQUENCE [MRNA]</scope>
    <scope>FUNCTION</scope>
    <scope>SYNTHESIS OF 46-73</scope>
    <scope>IDENTIFICATION BY MASS SPECTROMETRY</scope>
    <scope>SUBCELLULAR LOCATION</scope>
    <scope>3D-STRUCTURE MODELING</scope>
    <source>
        <tissue>Skin secretion</tissue>
    </source>
</reference>
<dbReference type="EMBL" id="MK532482">
    <property type="protein sequence ID" value="QFU19632.1"/>
    <property type="molecule type" value="mRNA"/>
</dbReference>
<dbReference type="GO" id="GO:0005576">
    <property type="term" value="C:extracellular region"/>
    <property type="evidence" value="ECO:0007669"/>
    <property type="project" value="UniProtKB-SubCell"/>
</dbReference>
<dbReference type="GO" id="GO:0016020">
    <property type="term" value="C:membrane"/>
    <property type="evidence" value="ECO:0007669"/>
    <property type="project" value="UniProtKB-KW"/>
</dbReference>
<dbReference type="GO" id="GO:0044218">
    <property type="term" value="C:other organism cell membrane"/>
    <property type="evidence" value="ECO:0007669"/>
    <property type="project" value="UniProtKB-KW"/>
</dbReference>
<dbReference type="GO" id="GO:0042742">
    <property type="term" value="P:defense response to bacterium"/>
    <property type="evidence" value="ECO:0007669"/>
    <property type="project" value="UniProtKB-KW"/>
</dbReference>
<dbReference type="GO" id="GO:0050832">
    <property type="term" value="P:defense response to fungus"/>
    <property type="evidence" value="ECO:0007669"/>
    <property type="project" value="UniProtKB-KW"/>
</dbReference>
<dbReference type="GO" id="GO:0045087">
    <property type="term" value="P:innate immune response"/>
    <property type="evidence" value="ECO:0007669"/>
    <property type="project" value="UniProtKB-KW"/>
</dbReference>
<dbReference type="GO" id="GO:0031640">
    <property type="term" value="P:killing of cells of another organism"/>
    <property type="evidence" value="ECO:0007669"/>
    <property type="project" value="UniProtKB-KW"/>
</dbReference>
<dbReference type="InterPro" id="IPR022731">
    <property type="entry name" value="Dermaseptin_dom"/>
</dbReference>
<dbReference type="InterPro" id="IPR004275">
    <property type="entry name" value="Frog_antimicrobial_propeptide"/>
</dbReference>
<dbReference type="InterPro" id="IPR016322">
    <property type="entry name" value="FSAP"/>
</dbReference>
<dbReference type="Pfam" id="PF12121">
    <property type="entry name" value="DD_K"/>
    <property type="match status" value="1"/>
</dbReference>
<dbReference type="Pfam" id="PF03032">
    <property type="entry name" value="FSAP_sig_propep"/>
    <property type="match status" value="1"/>
</dbReference>
<dbReference type="PIRSF" id="PIRSF001822">
    <property type="entry name" value="Dermaseptin_precursor"/>
    <property type="match status" value="1"/>
</dbReference>
<name>DRS4_AGASP</name>
<keyword id="KW-0027">Amidation</keyword>
<keyword id="KW-0878">Amphibian defense peptide</keyword>
<keyword id="KW-0044">Antibiotic</keyword>
<keyword id="KW-0929">Antimicrobial</keyword>
<keyword id="KW-0165">Cleavage on pair of basic residues</keyword>
<keyword id="KW-0204">Cytolysis</keyword>
<keyword id="KW-0295">Fungicide</keyword>
<keyword id="KW-0354">Hemolysis</keyword>
<keyword id="KW-0391">Immunity</keyword>
<keyword id="KW-0399">Innate immunity</keyword>
<keyword id="KW-0472">Membrane</keyword>
<keyword id="KW-0964">Secreted</keyword>
<keyword id="KW-0732">Signal</keyword>
<keyword id="KW-1052">Target cell membrane</keyword>
<keyword id="KW-1053">Target membrane</keyword>
<sequence>MAFLKKSLFLVLFLGLVSLSMCEEEKRENEVEEEQEDDEQSELRRSLWSSIKDMAAAAGRAALNAVNGILNPGEQ</sequence>
<proteinExistence type="evidence at protein level"/>
<accession>A0A5P9K6A8</accession>
<comment type="function">
    <text evidence="3 4 7">Antimicrobial peptide with activity against Gram-positive and Gram-negative bacteria and fungi (PubMed:31422479, PubMed:31671555). Has been tested against E.coli (MIC=47.25-128 uM), S.aureus (MIC=189-512 uM), K.pneumoniae (MIC=189 uM) and C.albicans (MIC&gt;189 uM) (PubMed:31422479, PubMed:31671555). Probably acts by disturbing membrane functions with its alpha-helical amphipathic structure (Probable). May penetrate bacterial membranes, but stay at the mammalian membrane surface (Probable). Shows a weak hemolytic activity (PubMed:31671555).</text>
</comment>
<comment type="subcellular location">
    <subcellularLocation>
        <location evidence="3 4">Secreted</location>
    </subcellularLocation>
    <subcellularLocation>
        <location evidence="1">Target cell membrane</location>
    </subcellularLocation>
</comment>
<comment type="tissue specificity">
    <text evidence="8">Expressed by the skin glands.</text>
</comment>
<comment type="similarity">
    <text evidence="6">Belongs to the frog skin active peptide (FSAP) family. Dermaseptin subfamily.</text>
</comment>